<sequence length="319" mass="35469">MSLNFLDFEQPIAELEAKIDSLTAVSRQDEKLDINLDEEVQRLREKSVELTRKIFSDLGAWQIAQLARHPRRPYTLDYIANIFTDFEELAGDRAYADDKAIVGGIARLDGRPVMIIGHQKGRETKEKIRRNFGMPAPEGYRKALRLMEMAERFKLPIITFIDTPGAYPGVGAEERGQSEAIARNLREMSRLNVPIVCTVIGEGGSGGALAIGVGDKVNMLQYSTYSVISPEGCASILWKSADKAPLAAEAMGITAHRLKELKMIDSVIPEPLGGAHRDYLAIAASLKAQLLADLSDLDVLNDEELLNRRYQRLMNYGYC</sequence>
<keyword id="KW-0067">ATP-binding</keyword>
<keyword id="KW-0963">Cytoplasm</keyword>
<keyword id="KW-0275">Fatty acid biosynthesis</keyword>
<keyword id="KW-0276">Fatty acid metabolism</keyword>
<keyword id="KW-0444">Lipid biosynthesis</keyword>
<keyword id="KW-0443">Lipid metabolism</keyword>
<keyword id="KW-0547">Nucleotide-binding</keyword>
<keyword id="KW-0808">Transferase</keyword>
<evidence type="ECO:0000255" key="1">
    <source>
        <dbReference type="HAMAP-Rule" id="MF_00823"/>
    </source>
</evidence>
<evidence type="ECO:0000255" key="2">
    <source>
        <dbReference type="PROSITE-ProRule" id="PRU01137"/>
    </source>
</evidence>
<reference key="1">
    <citation type="journal article" date="2006" name="PLoS Genet.">
        <title>The complete genome sequence and comparative genome analysis of the high pathogenicity Yersinia enterocolitica strain 8081.</title>
        <authorList>
            <person name="Thomson N.R."/>
            <person name="Howard S."/>
            <person name="Wren B.W."/>
            <person name="Holden M.T.G."/>
            <person name="Crossman L."/>
            <person name="Challis G.L."/>
            <person name="Churcher C."/>
            <person name="Mungall K."/>
            <person name="Brooks K."/>
            <person name="Chillingworth T."/>
            <person name="Feltwell T."/>
            <person name="Abdellah Z."/>
            <person name="Hauser H."/>
            <person name="Jagels K."/>
            <person name="Maddison M."/>
            <person name="Moule S."/>
            <person name="Sanders M."/>
            <person name="Whitehead S."/>
            <person name="Quail M.A."/>
            <person name="Dougan G."/>
            <person name="Parkhill J."/>
            <person name="Prentice M.B."/>
        </authorList>
    </citation>
    <scope>NUCLEOTIDE SEQUENCE [LARGE SCALE GENOMIC DNA]</scope>
    <source>
        <strain>NCTC 13174 / 8081</strain>
    </source>
</reference>
<comment type="function">
    <text evidence="1">Component of the acetyl coenzyme A carboxylase (ACC) complex. First, biotin carboxylase catalyzes the carboxylation of biotin on its carrier protein (BCCP) and then the CO(2) group is transferred by the carboxyltransferase to acetyl-CoA to form malonyl-CoA.</text>
</comment>
<comment type="catalytic activity">
    <reaction evidence="1">
        <text>N(6)-carboxybiotinyl-L-lysyl-[protein] + acetyl-CoA = N(6)-biotinyl-L-lysyl-[protein] + malonyl-CoA</text>
        <dbReference type="Rhea" id="RHEA:54728"/>
        <dbReference type="Rhea" id="RHEA-COMP:10505"/>
        <dbReference type="Rhea" id="RHEA-COMP:10506"/>
        <dbReference type="ChEBI" id="CHEBI:57288"/>
        <dbReference type="ChEBI" id="CHEBI:57384"/>
        <dbReference type="ChEBI" id="CHEBI:83144"/>
        <dbReference type="ChEBI" id="CHEBI:83145"/>
        <dbReference type="EC" id="2.1.3.15"/>
    </reaction>
</comment>
<comment type="pathway">
    <text evidence="1">Lipid metabolism; malonyl-CoA biosynthesis; malonyl-CoA from acetyl-CoA: step 1/1.</text>
</comment>
<comment type="subunit">
    <text evidence="1">Acetyl-CoA carboxylase is a heterohexamer composed of biotin carboxyl carrier protein (AccB), biotin carboxylase (AccC) and two subunits each of ACCase subunit alpha (AccA) and ACCase subunit beta (AccD).</text>
</comment>
<comment type="subcellular location">
    <subcellularLocation>
        <location evidence="1">Cytoplasm</location>
    </subcellularLocation>
</comment>
<comment type="similarity">
    <text evidence="1">Belongs to the AccA family.</text>
</comment>
<proteinExistence type="inferred from homology"/>
<organism>
    <name type="scientific">Yersinia enterocolitica serotype O:8 / biotype 1B (strain NCTC 13174 / 8081)</name>
    <dbReference type="NCBI Taxonomy" id="393305"/>
    <lineage>
        <taxon>Bacteria</taxon>
        <taxon>Pseudomonadati</taxon>
        <taxon>Pseudomonadota</taxon>
        <taxon>Gammaproteobacteria</taxon>
        <taxon>Enterobacterales</taxon>
        <taxon>Yersiniaceae</taxon>
        <taxon>Yersinia</taxon>
    </lineage>
</organism>
<accession>A1JP64</accession>
<gene>
    <name evidence="1" type="primary">accA</name>
    <name type="ordered locus">YE3268</name>
</gene>
<protein>
    <recommendedName>
        <fullName evidence="1">Acetyl-coenzyme A carboxylase carboxyl transferase subunit alpha</fullName>
        <shortName evidence="1">ACCase subunit alpha</shortName>
        <shortName evidence="1">Acetyl-CoA carboxylase carboxyltransferase subunit alpha</shortName>
        <ecNumber evidence="1">2.1.3.15</ecNumber>
    </recommendedName>
</protein>
<feature type="chain" id="PRO_1000062699" description="Acetyl-coenzyme A carboxylase carboxyl transferase subunit alpha">
    <location>
        <begin position="1"/>
        <end position="319"/>
    </location>
</feature>
<feature type="domain" description="CoA carboxyltransferase C-terminal" evidence="2">
    <location>
        <begin position="35"/>
        <end position="296"/>
    </location>
</feature>
<dbReference type="EC" id="2.1.3.15" evidence="1"/>
<dbReference type="EMBL" id="AM286415">
    <property type="protein sequence ID" value="CAL13298.1"/>
    <property type="molecule type" value="Genomic_DNA"/>
</dbReference>
<dbReference type="RefSeq" id="WP_004391685.1">
    <property type="nucleotide sequence ID" value="NC_008800.1"/>
</dbReference>
<dbReference type="RefSeq" id="YP_001007442.1">
    <property type="nucleotide sequence ID" value="NC_008800.1"/>
</dbReference>
<dbReference type="SMR" id="A1JP64"/>
<dbReference type="GeneID" id="82552154"/>
<dbReference type="KEGG" id="yen:YE3268"/>
<dbReference type="PATRIC" id="fig|393305.7.peg.3476"/>
<dbReference type="eggNOG" id="COG0825">
    <property type="taxonomic scope" value="Bacteria"/>
</dbReference>
<dbReference type="HOGENOM" id="CLU_015486_0_2_6"/>
<dbReference type="OrthoDB" id="9808023at2"/>
<dbReference type="UniPathway" id="UPA00655">
    <property type="reaction ID" value="UER00711"/>
</dbReference>
<dbReference type="Proteomes" id="UP000000642">
    <property type="component" value="Chromosome"/>
</dbReference>
<dbReference type="GO" id="GO:0009317">
    <property type="term" value="C:acetyl-CoA carboxylase complex"/>
    <property type="evidence" value="ECO:0007669"/>
    <property type="project" value="InterPro"/>
</dbReference>
<dbReference type="GO" id="GO:0003989">
    <property type="term" value="F:acetyl-CoA carboxylase activity"/>
    <property type="evidence" value="ECO:0007669"/>
    <property type="project" value="InterPro"/>
</dbReference>
<dbReference type="GO" id="GO:0005524">
    <property type="term" value="F:ATP binding"/>
    <property type="evidence" value="ECO:0007669"/>
    <property type="project" value="UniProtKB-KW"/>
</dbReference>
<dbReference type="GO" id="GO:0016743">
    <property type="term" value="F:carboxyl- or carbamoyltransferase activity"/>
    <property type="evidence" value="ECO:0007669"/>
    <property type="project" value="UniProtKB-UniRule"/>
</dbReference>
<dbReference type="GO" id="GO:0006633">
    <property type="term" value="P:fatty acid biosynthetic process"/>
    <property type="evidence" value="ECO:0007669"/>
    <property type="project" value="UniProtKB-KW"/>
</dbReference>
<dbReference type="GO" id="GO:2001295">
    <property type="term" value="P:malonyl-CoA biosynthetic process"/>
    <property type="evidence" value="ECO:0007669"/>
    <property type="project" value="UniProtKB-UniRule"/>
</dbReference>
<dbReference type="FunFam" id="3.90.226.10:FF:000008">
    <property type="entry name" value="Acetyl-coenzyme A carboxylase carboxyl transferase subunit alpha"/>
    <property type="match status" value="1"/>
</dbReference>
<dbReference type="Gene3D" id="3.90.226.10">
    <property type="entry name" value="2-enoyl-CoA Hydratase, Chain A, domain 1"/>
    <property type="match status" value="1"/>
</dbReference>
<dbReference type="HAMAP" id="MF_00823">
    <property type="entry name" value="AcetylCoA_CT_alpha"/>
    <property type="match status" value="1"/>
</dbReference>
<dbReference type="InterPro" id="IPR001095">
    <property type="entry name" value="Acetyl_CoA_COase_a_su"/>
</dbReference>
<dbReference type="InterPro" id="IPR029045">
    <property type="entry name" value="ClpP/crotonase-like_dom_sf"/>
</dbReference>
<dbReference type="InterPro" id="IPR011763">
    <property type="entry name" value="COA_CT_C"/>
</dbReference>
<dbReference type="NCBIfam" id="TIGR00513">
    <property type="entry name" value="accA"/>
    <property type="match status" value="1"/>
</dbReference>
<dbReference type="NCBIfam" id="NF041504">
    <property type="entry name" value="AccA_sub"/>
    <property type="match status" value="1"/>
</dbReference>
<dbReference type="NCBIfam" id="NF004344">
    <property type="entry name" value="PRK05724.1"/>
    <property type="match status" value="1"/>
</dbReference>
<dbReference type="PANTHER" id="PTHR42853">
    <property type="entry name" value="ACETYL-COENZYME A CARBOXYLASE CARBOXYL TRANSFERASE SUBUNIT ALPHA"/>
    <property type="match status" value="1"/>
</dbReference>
<dbReference type="PANTHER" id="PTHR42853:SF3">
    <property type="entry name" value="ACETYL-COENZYME A CARBOXYLASE CARBOXYL TRANSFERASE SUBUNIT ALPHA, CHLOROPLASTIC"/>
    <property type="match status" value="1"/>
</dbReference>
<dbReference type="Pfam" id="PF03255">
    <property type="entry name" value="ACCA"/>
    <property type="match status" value="1"/>
</dbReference>
<dbReference type="PRINTS" id="PR01069">
    <property type="entry name" value="ACCCTRFRASEA"/>
</dbReference>
<dbReference type="SUPFAM" id="SSF52096">
    <property type="entry name" value="ClpP/crotonase"/>
    <property type="match status" value="1"/>
</dbReference>
<dbReference type="PROSITE" id="PS50989">
    <property type="entry name" value="COA_CT_CTER"/>
    <property type="match status" value="1"/>
</dbReference>
<name>ACCA_YERE8</name>